<gene>
    <name type="primary">pikA</name>
    <name type="synonym">pik1</name>
    <name type="ORF">DDB_G0278727</name>
</gene>
<evidence type="ECO:0000255" key="1">
    <source>
        <dbReference type="PROSITE-ProRule" id="PRU00269"/>
    </source>
</evidence>
<evidence type="ECO:0000255" key="2">
    <source>
        <dbReference type="PROSITE-ProRule" id="PRU00877"/>
    </source>
</evidence>
<evidence type="ECO:0000255" key="3">
    <source>
        <dbReference type="PROSITE-ProRule" id="PRU00878"/>
    </source>
</evidence>
<evidence type="ECO:0000255" key="4">
    <source>
        <dbReference type="PROSITE-ProRule" id="PRU00879"/>
    </source>
</evidence>
<evidence type="ECO:0000255" key="5">
    <source>
        <dbReference type="PROSITE-ProRule" id="PRU00880"/>
    </source>
</evidence>
<evidence type="ECO:0000256" key="6">
    <source>
        <dbReference type="SAM" id="MobiDB-lite"/>
    </source>
</evidence>
<evidence type="ECO:0000305" key="7"/>
<dbReference type="EC" id="2.7.1.137"/>
<dbReference type="EMBL" id="U23476">
    <property type="protein sequence ID" value="AAA85721.1"/>
    <property type="status" value="ALT_FRAME"/>
    <property type="molecule type" value="mRNA"/>
</dbReference>
<dbReference type="EMBL" id="AAFI02000024">
    <property type="protein sequence ID" value="EAL67965.1"/>
    <property type="molecule type" value="Genomic_DNA"/>
</dbReference>
<dbReference type="PIR" id="T18272">
    <property type="entry name" value="T18272"/>
</dbReference>
<dbReference type="RefSeq" id="XP_641955.1">
    <property type="nucleotide sequence ID" value="XM_636863.1"/>
</dbReference>
<dbReference type="SMR" id="P54673"/>
<dbReference type="FunCoup" id="P54673">
    <property type="interactions" value="68"/>
</dbReference>
<dbReference type="STRING" id="44689.P54673"/>
<dbReference type="GlyGen" id="P54673">
    <property type="glycosylation" value="1 site"/>
</dbReference>
<dbReference type="PaxDb" id="44689-DDB0214949"/>
<dbReference type="EnsemblProtists" id="EAL67965">
    <property type="protein sequence ID" value="EAL67965"/>
    <property type="gene ID" value="DDB_G0278727"/>
</dbReference>
<dbReference type="GeneID" id="8621687"/>
<dbReference type="KEGG" id="ddi:DDB_G0278727"/>
<dbReference type="dictyBase" id="DDB_G0278727">
    <property type="gene designation" value="pikA"/>
</dbReference>
<dbReference type="VEuPathDB" id="AmoebaDB:DDB_G0278727"/>
<dbReference type="eggNOG" id="KOG0904">
    <property type="taxonomic scope" value="Eukaryota"/>
</dbReference>
<dbReference type="HOGENOM" id="CLU_245488_0_0_1"/>
<dbReference type="InParanoid" id="P54673"/>
<dbReference type="OMA" id="FMNLFAM"/>
<dbReference type="PhylomeDB" id="P54673"/>
<dbReference type="BRENDA" id="2.7.1.137">
    <property type="organism ID" value="1939"/>
</dbReference>
<dbReference type="Reactome" id="R-DDI-114604">
    <property type="pathway name" value="GPVI-mediated activation cascade"/>
</dbReference>
<dbReference type="Reactome" id="R-DDI-1660499">
    <property type="pathway name" value="Synthesis of PIPs at the plasma membrane"/>
</dbReference>
<dbReference type="Reactome" id="R-DDI-1660514">
    <property type="pathway name" value="Synthesis of PIPs at the Golgi membrane"/>
</dbReference>
<dbReference type="Reactome" id="R-DDI-1660516">
    <property type="pathway name" value="Synthesis of PIPs at the early endosome membrane"/>
</dbReference>
<dbReference type="Reactome" id="R-DDI-1660517">
    <property type="pathway name" value="Synthesis of PIPs at the late endosome membrane"/>
</dbReference>
<dbReference type="Reactome" id="R-DDI-392451">
    <property type="pathway name" value="G beta:gamma signalling through PI3Kgamma"/>
</dbReference>
<dbReference type="Reactome" id="R-DDI-8856828">
    <property type="pathway name" value="Clathrin-mediated endocytosis"/>
</dbReference>
<dbReference type="PRO" id="PR:P54673"/>
<dbReference type="Proteomes" id="UP000002195">
    <property type="component" value="Chromosome 3"/>
</dbReference>
<dbReference type="GO" id="GO:0031252">
    <property type="term" value="C:cell leading edge"/>
    <property type="evidence" value="ECO:0000314"/>
    <property type="project" value="dictyBase"/>
</dbReference>
<dbReference type="GO" id="GO:0005737">
    <property type="term" value="C:cytoplasm"/>
    <property type="evidence" value="ECO:0000318"/>
    <property type="project" value="GO_Central"/>
</dbReference>
<dbReference type="GO" id="GO:0005829">
    <property type="term" value="C:cytosol"/>
    <property type="evidence" value="ECO:0000304"/>
    <property type="project" value="dictyBase"/>
</dbReference>
<dbReference type="GO" id="GO:0005886">
    <property type="term" value="C:plasma membrane"/>
    <property type="evidence" value="ECO:0000314"/>
    <property type="project" value="dictyBase"/>
</dbReference>
<dbReference type="GO" id="GO:0031143">
    <property type="term" value="C:pseudopodium"/>
    <property type="evidence" value="ECO:0000304"/>
    <property type="project" value="dictyBase"/>
</dbReference>
<dbReference type="GO" id="GO:0016303">
    <property type="term" value="F:1-phosphatidylinositol-3-kinase activity"/>
    <property type="evidence" value="ECO:0000318"/>
    <property type="project" value="GO_Central"/>
</dbReference>
<dbReference type="GO" id="GO:0046934">
    <property type="term" value="F:1-phosphatidylinositol-4,5-bisphosphate 3-kinase activity"/>
    <property type="evidence" value="ECO:0000314"/>
    <property type="project" value="dictyBase"/>
</dbReference>
<dbReference type="GO" id="GO:0035005">
    <property type="term" value="F:1-phosphatidylinositol-4-phosphate 3-kinase activity"/>
    <property type="evidence" value="ECO:0000318"/>
    <property type="project" value="GO_Central"/>
</dbReference>
<dbReference type="GO" id="GO:0010856">
    <property type="term" value="F:adenylate cyclase activator activity"/>
    <property type="evidence" value="ECO:0000314"/>
    <property type="project" value="dictyBase"/>
</dbReference>
<dbReference type="GO" id="GO:0010855">
    <property type="term" value="F:adenylate cyclase inhibitor activity"/>
    <property type="evidence" value="ECO:0000314"/>
    <property type="project" value="dictyBase"/>
</dbReference>
<dbReference type="GO" id="GO:0005524">
    <property type="term" value="F:ATP binding"/>
    <property type="evidence" value="ECO:0007669"/>
    <property type="project" value="UniProtKB-KW"/>
</dbReference>
<dbReference type="GO" id="GO:0030295">
    <property type="term" value="F:protein kinase activator activity"/>
    <property type="evidence" value="ECO:0000316"/>
    <property type="project" value="dictyBase"/>
</dbReference>
<dbReference type="GO" id="GO:0031267">
    <property type="term" value="F:small GTPase binding"/>
    <property type="evidence" value="ECO:0000353"/>
    <property type="project" value="dictyBase"/>
</dbReference>
<dbReference type="GO" id="GO:0030036">
    <property type="term" value="P:actin cytoskeleton organization"/>
    <property type="evidence" value="ECO:0000316"/>
    <property type="project" value="dictyBase"/>
</dbReference>
<dbReference type="GO" id="GO:0031152">
    <property type="term" value="P:aggregation involved in sorocarp development"/>
    <property type="evidence" value="ECO:0000304"/>
    <property type="project" value="dictyBase"/>
</dbReference>
<dbReference type="GO" id="GO:0019954">
    <property type="term" value="P:asexual reproduction"/>
    <property type="evidence" value="ECO:0000315"/>
    <property type="project" value="dictyBase"/>
</dbReference>
<dbReference type="GO" id="GO:0032060">
    <property type="term" value="P:bleb assembly"/>
    <property type="evidence" value="ECO:0000316"/>
    <property type="project" value="dictyBase"/>
</dbReference>
<dbReference type="GO" id="GO:0016477">
    <property type="term" value="P:cell migration"/>
    <property type="evidence" value="ECO:0000318"/>
    <property type="project" value="GO_Central"/>
</dbReference>
<dbReference type="GO" id="GO:0048870">
    <property type="term" value="P:cell motility"/>
    <property type="evidence" value="ECO:0000316"/>
    <property type="project" value="dictyBase"/>
</dbReference>
<dbReference type="GO" id="GO:0006935">
    <property type="term" value="P:chemotaxis"/>
    <property type="evidence" value="ECO:0000315"/>
    <property type="project" value="dictyBase"/>
</dbReference>
<dbReference type="GO" id="GO:0043327">
    <property type="term" value="P:chemotaxis to cAMP"/>
    <property type="evidence" value="ECO:0000316"/>
    <property type="project" value="dictyBase"/>
</dbReference>
<dbReference type="GO" id="GO:0007186">
    <property type="term" value="P:G protein-coupled receptor signaling pathway"/>
    <property type="evidence" value="ECO:0000315"/>
    <property type="project" value="dictyBase"/>
</dbReference>
<dbReference type="GO" id="GO:0044351">
    <property type="term" value="P:macropinocytosis"/>
    <property type="evidence" value="ECO:0000315"/>
    <property type="project" value="dictyBase"/>
</dbReference>
<dbReference type="GO" id="GO:0030011">
    <property type="term" value="P:maintenance of cell polarity"/>
    <property type="evidence" value="ECO:0000316"/>
    <property type="project" value="dictyBase"/>
</dbReference>
<dbReference type="GO" id="GO:0050919">
    <property type="term" value="P:negative chemotaxis"/>
    <property type="evidence" value="ECO:0000316"/>
    <property type="project" value="dictyBase"/>
</dbReference>
<dbReference type="GO" id="GO:0001845">
    <property type="term" value="P:phagolysosome assembly"/>
    <property type="evidence" value="ECO:0000316"/>
    <property type="project" value="dictyBase"/>
</dbReference>
<dbReference type="GO" id="GO:0090382">
    <property type="term" value="P:phagosome maturation"/>
    <property type="evidence" value="ECO:0000316"/>
    <property type="project" value="dictyBase"/>
</dbReference>
<dbReference type="GO" id="GO:0043491">
    <property type="term" value="P:phosphatidylinositol 3-kinase/protein kinase B signal transduction"/>
    <property type="evidence" value="ECO:0000316"/>
    <property type="project" value="dictyBase"/>
</dbReference>
<dbReference type="GO" id="GO:0006661">
    <property type="term" value="P:phosphatidylinositol biosynthetic process"/>
    <property type="evidence" value="ECO:0000316"/>
    <property type="project" value="dictyBase"/>
</dbReference>
<dbReference type="GO" id="GO:0036092">
    <property type="term" value="P:phosphatidylinositol-3-phosphate biosynthetic process"/>
    <property type="evidence" value="ECO:0000318"/>
    <property type="project" value="GO_Central"/>
</dbReference>
<dbReference type="GO" id="GO:0048015">
    <property type="term" value="P:phosphatidylinositol-mediated signaling"/>
    <property type="evidence" value="ECO:0000316"/>
    <property type="project" value="dictyBase"/>
</dbReference>
<dbReference type="GO" id="GO:1905303">
    <property type="term" value="P:positive regulation of macropinocytosis"/>
    <property type="evidence" value="ECO:0000316"/>
    <property type="project" value="dictyBase"/>
</dbReference>
<dbReference type="GO" id="GO:0051897">
    <property type="term" value="P:positive regulation of phosphatidylinositol 3-kinase/protein kinase B signal transduction"/>
    <property type="evidence" value="ECO:0000316"/>
    <property type="project" value="dictyBase"/>
</dbReference>
<dbReference type="GO" id="GO:0031269">
    <property type="term" value="P:pseudopodium assembly"/>
    <property type="evidence" value="ECO:0000316"/>
    <property type="project" value="dictyBase"/>
</dbReference>
<dbReference type="GO" id="GO:0022604">
    <property type="term" value="P:regulation of cell morphogenesis"/>
    <property type="evidence" value="ECO:0000316"/>
    <property type="project" value="dictyBase"/>
</dbReference>
<dbReference type="GO" id="GO:0050920">
    <property type="term" value="P:regulation of chemotaxis"/>
    <property type="evidence" value="ECO:0000316"/>
    <property type="project" value="dictyBase"/>
</dbReference>
<dbReference type="GO" id="GO:1900027">
    <property type="term" value="P:regulation of ruffle assembly"/>
    <property type="evidence" value="ECO:0000315"/>
    <property type="project" value="dictyBase"/>
</dbReference>
<dbReference type="GO" id="GO:0009617">
    <property type="term" value="P:response to bacterium"/>
    <property type="evidence" value="ECO:0000315"/>
    <property type="project" value="dictyBase"/>
</dbReference>
<dbReference type="GO" id="GO:0031000">
    <property type="term" value="P:response to caffeine"/>
    <property type="evidence" value="ECO:0000314"/>
    <property type="project" value="dictyBase"/>
</dbReference>
<dbReference type="GO" id="GO:0051591">
    <property type="term" value="P:response to cAMP"/>
    <property type="evidence" value="ECO:0000316"/>
    <property type="project" value="dictyBase"/>
</dbReference>
<dbReference type="CDD" id="cd08380">
    <property type="entry name" value="C2_PI3K_like"/>
    <property type="match status" value="1"/>
</dbReference>
<dbReference type="CDD" id="cd00872">
    <property type="entry name" value="PI3Ka_I"/>
    <property type="match status" value="1"/>
</dbReference>
<dbReference type="CDD" id="cd00891">
    <property type="entry name" value="PI3Kc"/>
    <property type="match status" value="1"/>
</dbReference>
<dbReference type="FunFam" id="1.25.40.70:FF:000050">
    <property type="entry name" value="Phosphatidylinositol 3-kinase 1"/>
    <property type="match status" value="1"/>
</dbReference>
<dbReference type="FunFam" id="3.10.20.770:FF:000014">
    <property type="entry name" value="Phosphatidylinositol 3-kinase 1"/>
    <property type="match status" value="1"/>
</dbReference>
<dbReference type="FunFam" id="1.10.1070.11:FF:000001">
    <property type="entry name" value="Phosphatidylinositol 4,5-bisphosphate 3-kinase catalytic subunit"/>
    <property type="match status" value="1"/>
</dbReference>
<dbReference type="FunFam" id="3.30.1010.10:FF:000008">
    <property type="entry name" value="Phosphatidylinositol 4,5-bisphosphate 3-kinase catalytic subunit gamma"/>
    <property type="match status" value="1"/>
</dbReference>
<dbReference type="Gene3D" id="3.10.20.770">
    <property type="match status" value="1"/>
</dbReference>
<dbReference type="Gene3D" id="2.60.40.150">
    <property type="entry name" value="C2 domain"/>
    <property type="match status" value="1"/>
</dbReference>
<dbReference type="Gene3D" id="1.10.1070.11">
    <property type="entry name" value="Phosphatidylinositol 3-/4-kinase, catalytic domain"/>
    <property type="match status" value="1"/>
</dbReference>
<dbReference type="Gene3D" id="3.30.1010.10">
    <property type="entry name" value="Phosphatidylinositol 3-kinase Catalytic Subunit, Chain A, domain 4"/>
    <property type="match status" value="1"/>
</dbReference>
<dbReference type="Gene3D" id="1.25.40.70">
    <property type="entry name" value="Phosphatidylinositol 3-kinase, accessory domain (PIK)"/>
    <property type="match status" value="1"/>
</dbReference>
<dbReference type="InterPro" id="IPR016024">
    <property type="entry name" value="ARM-type_fold"/>
</dbReference>
<dbReference type="InterPro" id="IPR035892">
    <property type="entry name" value="C2_domain_sf"/>
</dbReference>
<dbReference type="InterPro" id="IPR011009">
    <property type="entry name" value="Kinase-like_dom_sf"/>
</dbReference>
<dbReference type="InterPro" id="IPR000403">
    <property type="entry name" value="PI3/4_kinase_cat_dom"/>
</dbReference>
<dbReference type="InterPro" id="IPR036940">
    <property type="entry name" value="PI3/4_kinase_cat_sf"/>
</dbReference>
<dbReference type="InterPro" id="IPR018936">
    <property type="entry name" value="PI3/4_kinase_CS"/>
</dbReference>
<dbReference type="InterPro" id="IPR002420">
    <property type="entry name" value="PI3K-type_C2_dom"/>
</dbReference>
<dbReference type="InterPro" id="IPR003113">
    <property type="entry name" value="PI3K_ABD"/>
</dbReference>
<dbReference type="InterPro" id="IPR001263">
    <property type="entry name" value="PI3K_accessory_dom"/>
</dbReference>
<dbReference type="InterPro" id="IPR042236">
    <property type="entry name" value="PI3K_accessory_sf"/>
</dbReference>
<dbReference type="InterPro" id="IPR000341">
    <property type="entry name" value="PI3K_Ras-bd_dom"/>
</dbReference>
<dbReference type="InterPro" id="IPR035448">
    <property type="entry name" value="PI3Kc"/>
</dbReference>
<dbReference type="InterPro" id="IPR015433">
    <property type="entry name" value="PI_Kinase"/>
</dbReference>
<dbReference type="InterPro" id="IPR029071">
    <property type="entry name" value="Ubiquitin-like_domsf"/>
</dbReference>
<dbReference type="PANTHER" id="PTHR10048:SF14">
    <property type="entry name" value="LD28067P"/>
    <property type="match status" value="1"/>
</dbReference>
<dbReference type="PANTHER" id="PTHR10048">
    <property type="entry name" value="PHOSPHATIDYLINOSITOL KINASE"/>
    <property type="match status" value="1"/>
</dbReference>
<dbReference type="Pfam" id="PF00454">
    <property type="entry name" value="PI3_PI4_kinase"/>
    <property type="match status" value="1"/>
</dbReference>
<dbReference type="Pfam" id="PF00792">
    <property type="entry name" value="PI3K_C2"/>
    <property type="match status" value="1"/>
</dbReference>
<dbReference type="Pfam" id="PF00794">
    <property type="entry name" value="PI3K_rbd"/>
    <property type="match status" value="1"/>
</dbReference>
<dbReference type="Pfam" id="PF00613">
    <property type="entry name" value="PI3Ka"/>
    <property type="match status" value="1"/>
</dbReference>
<dbReference type="SMART" id="SM00142">
    <property type="entry name" value="PI3K_C2"/>
    <property type="match status" value="1"/>
</dbReference>
<dbReference type="SMART" id="SM00144">
    <property type="entry name" value="PI3K_rbd"/>
    <property type="match status" value="1"/>
</dbReference>
<dbReference type="SMART" id="SM00145">
    <property type="entry name" value="PI3Ka"/>
    <property type="match status" value="1"/>
</dbReference>
<dbReference type="SMART" id="SM00146">
    <property type="entry name" value="PI3Kc"/>
    <property type="match status" value="1"/>
</dbReference>
<dbReference type="SUPFAM" id="SSF48371">
    <property type="entry name" value="ARM repeat"/>
    <property type="match status" value="1"/>
</dbReference>
<dbReference type="SUPFAM" id="SSF49562">
    <property type="entry name" value="C2 domain (Calcium/lipid-binding domain, CaLB)"/>
    <property type="match status" value="1"/>
</dbReference>
<dbReference type="SUPFAM" id="SSF56112">
    <property type="entry name" value="Protein kinase-like (PK-like)"/>
    <property type="match status" value="1"/>
</dbReference>
<dbReference type="SUPFAM" id="SSF54236">
    <property type="entry name" value="Ubiquitin-like"/>
    <property type="match status" value="1"/>
</dbReference>
<dbReference type="PROSITE" id="PS51547">
    <property type="entry name" value="C2_PI3K"/>
    <property type="match status" value="1"/>
</dbReference>
<dbReference type="PROSITE" id="PS00915">
    <property type="entry name" value="PI3_4_KINASE_1"/>
    <property type="match status" value="1"/>
</dbReference>
<dbReference type="PROSITE" id="PS00916">
    <property type="entry name" value="PI3_4_KINASE_2"/>
    <property type="match status" value="1"/>
</dbReference>
<dbReference type="PROSITE" id="PS50290">
    <property type="entry name" value="PI3_4_KINASE_3"/>
    <property type="match status" value="1"/>
</dbReference>
<dbReference type="PROSITE" id="PS51544">
    <property type="entry name" value="PI3K_ABD"/>
    <property type="match status" value="1"/>
</dbReference>
<dbReference type="PROSITE" id="PS51546">
    <property type="entry name" value="PI3K_RBD"/>
    <property type="match status" value="1"/>
</dbReference>
<dbReference type="PROSITE" id="PS51545">
    <property type="entry name" value="PIK_HELICAL"/>
    <property type="match status" value="1"/>
</dbReference>
<feature type="chain" id="PRO_0000088822" description="Phosphatidylinositol 3-kinase 1">
    <location>
        <begin position="1"/>
        <end position="1571"/>
    </location>
</feature>
<feature type="domain" description="PI3K-ABD" evidence="2">
    <location>
        <begin position="530"/>
        <end position="627"/>
    </location>
</feature>
<feature type="domain" description="PI3K-RBD" evidence="4">
    <location>
        <begin position="700"/>
        <end position="789"/>
    </location>
</feature>
<feature type="domain" description="C2 PI3K-type" evidence="5">
    <location>
        <begin position="851"/>
        <end position="1020"/>
    </location>
</feature>
<feature type="domain" description="PIK helical" evidence="3">
    <location>
        <begin position="1040"/>
        <end position="1216"/>
    </location>
</feature>
<feature type="domain" description="PI3K/PI4K catalytic" evidence="1">
    <location>
        <begin position="1280"/>
        <end position="1558"/>
    </location>
</feature>
<feature type="region of interest" description="Disordered" evidence="6">
    <location>
        <begin position="1"/>
        <end position="119"/>
    </location>
</feature>
<feature type="region of interest" description="Disordered" evidence="6">
    <location>
        <begin position="157"/>
        <end position="195"/>
    </location>
</feature>
<feature type="region of interest" description="Disordered" evidence="6">
    <location>
        <begin position="283"/>
        <end position="430"/>
    </location>
</feature>
<feature type="region of interest" description="G-loop" evidence="1">
    <location>
        <begin position="1286"/>
        <end position="1292"/>
    </location>
</feature>
<feature type="region of interest" description="Catalytic loop" evidence="1">
    <location>
        <begin position="1424"/>
        <end position="1432"/>
    </location>
</feature>
<feature type="region of interest" description="Activation loop" evidence="1">
    <location>
        <begin position="1443"/>
        <end position="1469"/>
    </location>
</feature>
<feature type="compositionally biased region" description="Low complexity" evidence="6">
    <location>
        <begin position="1"/>
        <end position="73"/>
    </location>
</feature>
<feature type="compositionally biased region" description="Basic and acidic residues" evidence="6">
    <location>
        <begin position="74"/>
        <end position="85"/>
    </location>
</feature>
<feature type="compositionally biased region" description="Low complexity" evidence="6">
    <location>
        <begin position="101"/>
        <end position="119"/>
    </location>
</feature>
<feature type="compositionally biased region" description="Basic and acidic residues" evidence="6">
    <location>
        <begin position="283"/>
        <end position="292"/>
    </location>
</feature>
<feature type="compositionally biased region" description="Low complexity" evidence="6">
    <location>
        <begin position="294"/>
        <end position="324"/>
    </location>
</feature>
<feature type="compositionally biased region" description="Polar residues" evidence="6">
    <location>
        <begin position="325"/>
        <end position="337"/>
    </location>
</feature>
<feature type="compositionally biased region" description="Low complexity" evidence="6">
    <location>
        <begin position="360"/>
        <end position="382"/>
    </location>
</feature>
<feature type="compositionally biased region" description="Low complexity" evidence="6">
    <location>
        <begin position="405"/>
        <end position="424"/>
    </location>
</feature>
<feature type="sequence conflict" description="In Ref. 1; AAA85721." evidence="7" ref="1">
    <original>D</original>
    <variation>H</variation>
    <location>
        <position position="749"/>
    </location>
</feature>
<feature type="sequence conflict" description="In Ref. 1; AAA85721." evidence="7" ref="1">
    <original>A</original>
    <variation>G</variation>
    <location>
        <position position="1494"/>
    </location>
</feature>
<feature type="sequence conflict" description="In Ref. 1; AAA85721." evidence="7" ref="1">
    <original>E</original>
    <variation>A</variation>
    <location>
        <position position="1540"/>
    </location>
</feature>
<keyword id="KW-0067">ATP-binding</keyword>
<keyword id="KW-0418">Kinase</keyword>
<keyword id="KW-0547">Nucleotide-binding</keyword>
<keyword id="KW-1185">Reference proteome</keyword>
<keyword id="KW-0808">Transferase</keyword>
<comment type="catalytic activity">
    <reaction>
        <text>a 1,2-diacyl-sn-glycero-3-phospho-(1D-myo-inositol) + ATP = a 1,2-diacyl-sn-glycero-3-phospho-(1D-myo-inositol-3-phosphate) + ADP + H(+)</text>
        <dbReference type="Rhea" id="RHEA:12709"/>
        <dbReference type="ChEBI" id="CHEBI:15378"/>
        <dbReference type="ChEBI" id="CHEBI:30616"/>
        <dbReference type="ChEBI" id="CHEBI:57880"/>
        <dbReference type="ChEBI" id="CHEBI:58088"/>
        <dbReference type="ChEBI" id="CHEBI:456216"/>
        <dbReference type="EC" id="2.7.1.137"/>
    </reaction>
</comment>
<comment type="similarity">
    <text evidence="2 4 5">Belongs to the PI3/PI4-kinase family.</text>
</comment>
<comment type="sequence caution" evidence="7">
    <conflict type="frameshift">
        <sequence resource="EMBL-CDS" id="AAA85721"/>
    </conflict>
</comment>
<proteinExistence type="evidence at transcript level"/>
<sequence length="1571" mass="178472">MNSIESSSNDSNEINKNSNKNNTHLNSNYNNIYKNNSTSSNNNNNHNNIEIIGIDNNKNNNKNNNDNNNNNNNIDKKRKDSKNKQNQEINQEMSENKKIYNSNDSNCSSGSSSGGHVNNGHHILIEENERLEHENQEIQEIYKQKGMEFQKKDLRFGYDVNSNNNNNNGGGSSSGSSSGGSDESASNQPIIRTRNREGSILNLKKQGLVKEISQRFQTPDTASYTRPNANNISIKDKISILKKEQERRKQDSEVQQREKVIVLSADSSNIQIYHPSVLIEKMNSKLDTEEKPATTTTTTTTTSTSISTSTPTTTTTTTTNTSTTNDITIKPKTSPTKNNEERSQSPITTPKQPVEEIVKKVSTPKSNNTSKKTSSDTTPTGKTTKKDKKDKKDKSRDSGNLVIVNNTNNTSSNNNNNNNNNNNNETIIKRRGRVLVTPSSDLKKNIQIYFTIPINPPVNKTNKPNQLLSNTSQQFLKTLISNEIPIDCKINDINDTDAFSDLSASASSSSFITKSSQSLLNVQSLRVKAIKTSFNILFLMPNQSKKILQVKGSDTIENLKERIISDYLFNNNSNNNNNNCKYGADSYLILDFNDNPMERSLVLNKSDYILDKRAQGLIPKLKVIEKSTILDSDPSDELSPSEYEIIRKLIPGTDTWRGEEVEYFRRVTSRLRYEALPLIKGSIQSTLLVRLSPLPIPIVGNKILISIFLPITQVTKTLDLELNETADQFTNRLFTKNYSKHLPNVNSNDFILKVVGSSDFIHGPHDIRTFESIRNHIIQGTKPQLTLIQRPKPELDPQPFKPRFDYPPELIIDHSCSNAINCNNNNTNSTNNNNINFDNWDQITHISIREIKKPFRVKVMGSTRIPLSCIKDIDSSSVIVSISLYHGIECFSKAFTQPIIPPPFAFLAETLSVDWCEWLVFTNIDYSNLPVDARLSISVYSANETVDDVEEIKNLDEATKKLTPIGWINVMITDFKYQLRQGMVELSLWPSDFSNPLGTCSNNPSSSQSVGLTLEFEEFNLPVLFPRKTKFSTSVSVIEQPPTNINSNEMREFFEQITALDPLSDLKQEKYNQLWTLRHYSILFPQVLPRLMLSVPWTQATAVDEAISLLDRWPKLKPYESLELLDAKHANRKVREFAVTCLEDLSEDELLDILLQLVQVLKYEPFHDSKLSRFLLRKAILNRNIGHSFFWYLKSDLHDSNLSERFGILLESYLYACGAHRIELLKQMEVINNLTEVAKKIKPLKDQDRREFMIKEFESLEWPKRFHLTLNPRFESNGLIINKSKYMDSKKLPLRLSFTNTDMNADPIEVIFKAGDDLRQDMLTLQMIRLMDKLWQKEGLDLKLSPYGCISTGDMIGMIEVVLNSETTAKIQKSEGGGAASAFKLDPLANWILQHNKSDMEYQKAVDTFILSCAGYCVATYVLGIGDRHNDNLMVTKGGRLFHIDFGHFLGNYKKKFGFKRERAPFVFTPDFCYVMGGKESFKFSQFVNYCCTAYNIVRKNAKLFMNLFAMMVSTGIPELQSMEDLNYLKESFSIELSDEKAREKFVALIHESLATKTTQLNNFFHHLAHA</sequence>
<name>PI3K1_DICDI</name>
<accession>P54673</accession>
<accession>Q54XS5</accession>
<reference key="1">
    <citation type="journal article" date="1995" name="Mol. Cell. Biol.">
        <title>A phosphatidylinositol (PI) kinase gene family in Dictyostelium discoideum: biological roles of putative mammalian p110 and yeast Vps34p PI 3-kinase homologs during growth and development.</title>
        <authorList>
            <person name="Zhou K."/>
            <person name="Takegawa K."/>
            <person name="Emr S.D."/>
            <person name="Firtel R.A."/>
        </authorList>
    </citation>
    <scope>NUCLEOTIDE SEQUENCE [MRNA]</scope>
    <source>
        <strain>AX3</strain>
    </source>
</reference>
<reference key="2">
    <citation type="journal article" date="2005" name="Nature">
        <title>The genome of the social amoeba Dictyostelium discoideum.</title>
        <authorList>
            <person name="Eichinger L."/>
            <person name="Pachebat J.A."/>
            <person name="Gloeckner G."/>
            <person name="Rajandream M.A."/>
            <person name="Sucgang R."/>
            <person name="Berriman M."/>
            <person name="Song J."/>
            <person name="Olsen R."/>
            <person name="Szafranski K."/>
            <person name="Xu Q."/>
            <person name="Tunggal B."/>
            <person name="Kummerfeld S."/>
            <person name="Madera M."/>
            <person name="Konfortov B.A."/>
            <person name="Rivero F."/>
            <person name="Bankier A.T."/>
            <person name="Lehmann R."/>
            <person name="Hamlin N."/>
            <person name="Davies R."/>
            <person name="Gaudet P."/>
            <person name="Fey P."/>
            <person name="Pilcher K."/>
            <person name="Chen G."/>
            <person name="Saunders D."/>
            <person name="Sodergren E.J."/>
            <person name="Davis P."/>
            <person name="Kerhornou A."/>
            <person name="Nie X."/>
            <person name="Hall N."/>
            <person name="Anjard C."/>
            <person name="Hemphill L."/>
            <person name="Bason N."/>
            <person name="Farbrother P."/>
            <person name="Desany B."/>
            <person name="Just E."/>
            <person name="Morio T."/>
            <person name="Rost R."/>
            <person name="Churcher C.M."/>
            <person name="Cooper J."/>
            <person name="Haydock S."/>
            <person name="van Driessche N."/>
            <person name="Cronin A."/>
            <person name="Goodhead I."/>
            <person name="Muzny D.M."/>
            <person name="Mourier T."/>
            <person name="Pain A."/>
            <person name="Lu M."/>
            <person name="Harper D."/>
            <person name="Lindsay R."/>
            <person name="Hauser H."/>
            <person name="James K.D."/>
            <person name="Quiles M."/>
            <person name="Madan Babu M."/>
            <person name="Saito T."/>
            <person name="Buchrieser C."/>
            <person name="Wardroper A."/>
            <person name="Felder M."/>
            <person name="Thangavelu M."/>
            <person name="Johnson D."/>
            <person name="Knights A."/>
            <person name="Loulseged H."/>
            <person name="Mungall K.L."/>
            <person name="Oliver K."/>
            <person name="Price C."/>
            <person name="Quail M.A."/>
            <person name="Urushihara H."/>
            <person name="Hernandez J."/>
            <person name="Rabbinowitsch E."/>
            <person name="Steffen D."/>
            <person name="Sanders M."/>
            <person name="Ma J."/>
            <person name="Kohara Y."/>
            <person name="Sharp S."/>
            <person name="Simmonds M.N."/>
            <person name="Spiegler S."/>
            <person name="Tivey A."/>
            <person name="Sugano S."/>
            <person name="White B."/>
            <person name="Walker D."/>
            <person name="Woodward J.R."/>
            <person name="Winckler T."/>
            <person name="Tanaka Y."/>
            <person name="Shaulsky G."/>
            <person name="Schleicher M."/>
            <person name="Weinstock G.M."/>
            <person name="Rosenthal A."/>
            <person name="Cox E.C."/>
            <person name="Chisholm R.L."/>
            <person name="Gibbs R.A."/>
            <person name="Loomis W.F."/>
            <person name="Platzer M."/>
            <person name="Kay R.R."/>
            <person name="Williams J.G."/>
            <person name="Dear P.H."/>
            <person name="Noegel A.A."/>
            <person name="Barrell B.G."/>
            <person name="Kuspa A."/>
        </authorList>
    </citation>
    <scope>NUCLEOTIDE SEQUENCE [LARGE SCALE GENOMIC DNA]</scope>
    <source>
        <strain>AX4</strain>
    </source>
</reference>
<protein>
    <recommendedName>
        <fullName>Phosphatidylinositol 3-kinase 1</fullName>
        <shortName>PI3-kinase</shortName>
        <shortName>PI3K</shortName>
        <shortName>PtdIns-3-kinase</shortName>
        <ecNumber>2.7.1.137</ecNumber>
    </recommendedName>
</protein>
<organism>
    <name type="scientific">Dictyostelium discoideum</name>
    <name type="common">Social amoeba</name>
    <dbReference type="NCBI Taxonomy" id="44689"/>
    <lineage>
        <taxon>Eukaryota</taxon>
        <taxon>Amoebozoa</taxon>
        <taxon>Evosea</taxon>
        <taxon>Eumycetozoa</taxon>
        <taxon>Dictyostelia</taxon>
        <taxon>Dictyosteliales</taxon>
        <taxon>Dictyosteliaceae</taxon>
        <taxon>Dictyostelium</taxon>
    </lineage>
</organism>